<keyword id="KW-0997">Cell inner membrane</keyword>
<keyword id="KW-1003">Cell membrane</keyword>
<keyword id="KW-0472">Membrane</keyword>
<keyword id="KW-1185">Reference proteome</keyword>
<accession>Q32CC5</accession>
<protein>
    <recommendedName>
        <fullName evidence="1">Protein Syd</fullName>
    </recommendedName>
</protein>
<proteinExistence type="inferred from homology"/>
<reference key="1">
    <citation type="journal article" date="2005" name="Nucleic Acids Res.">
        <title>Genome dynamics and diversity of Shigella species, the etiologic agents of bacillary dysentery.</title>
        <authorList>
            <person name="Yang F."/>
            <person name="Yang J."/>
            <person name="Zhang X."/>
            <person name="Chen L."/>
            <person name="Jiang Y."/>
            <person name="Yan Y."/>
            <person name="Tang X."/>
            <person name="Wang J."/>
            <person name="Xiong Z."/>
            <person name="Dong J."/>
            <person name="Xue Y."/>
            <person name="Zhu Y."/>
            <person name="Xu X."/>
            <person name="Sun L."/>
            <person name="Chen S."/>
            <person name="Nie H."/>
            <person name="Peng J."/>
            <person name="Xu J."/>
            <person name="Wang Y."/>
            <person name="Yuan Z."/>
            <person name="Wen Y."/>
            <person name="Yao Z."/>
            <person name="Shen Y."/>
            <person name="Qiang B."/>
            <person name="Hou Y."/>
            <person name="Yu J."/>
            <person name="Jin Q."/>
        </authorList>
    </citation>
    <scope>NUCLEOTIDE SEQUENCE [LARGE SCALE GENOMIC DNA]</scope>
    <source>
        <strain>Sd197</strain>
    </source>
</reference>
<organism>
    <name type="scientific">Shigella dysenteriae serotype 1 (strain Sd197)</name>
    <dbReference type="NCBI Taxonomy" id="300267"/>
    <lineage>
        <taxon>Bacteria</taxon>
        <taxon>Pseudomonadati</taxon>
        <taxon>Pseudomonadota</taxon>
        <taxon>Gammaproteobacteria</taxon>
        <taxon>Enterobacterales</taxon>
        <taxon>Enterobacteriaceae</taxon>
        <taxon>Shigella</taxon>
    </lineage>
</organism>
<comment type="function">
    <text evidence="1">Interacts with the SecY protein in vivo. May bind preferentially to an uncomplexed state of SecY, thus functioning either as a chelating agent for excess SecY in the cell or as a regulatory factor that negatively controls the translocase function.</text>
</comment>
<comment type="subcellular location">
    <subcellularLocation>
        <location evidence="1">Cell inner membrane</location>
        <topology evidence="1">Peripheral membrane protein</topology>
        <orientation evidence="1">Cytoplasmic side</orientation>
    </subcellularLocation>
    <text evidence="1">Loosely associated with the cytoplasmic side of the inner membrane, probably via SecY.</text>
</comment>
<comment type="similarity">
    <text evidence="1">Belongs to the Syd family.</text>
</comment>
<feature type="chain" id="PRO_0000298266" description="Protein Syd">
    <location>
        <begin position="1"/>
        <end position="181"/>
    </location>
</feature>
<dbReference type="EMBL" id="CP000034">
    <property type="protein sequence ID" value="ABB63030.1"/>
    <property type="molecule type" value="Genomic_DNA"/>
</dbReference>
<dbReference type="RefSeq" id="WP_000342443.1">
    <property type="nucleotide sequence ID" value="NC_007606.1"/>
</dbReference>
<dbReference type="RefSeq" id="YP_404521.1">
    <property type="nucleotide sequence ID" value="NC_007606.1"/>
</dbReference>
<dbReference type="SMR" id="Q32CC5"/>
<dbReference type="STRING" id="300267.SDY_3010"/>
<dbReference type="EnsemblBacteria" id="ABB63030">
    <property type="protein sequence ID" value="ABB63030"/>
    <property type="gene ID" value="SDY_3010"/>
</dbReference>
<dbReference type="KEGG" id="sdy:SDY_3010"/>
<dbReference type="PATRIC" id="fig|300267.13.peg.3614"/>
<dbReference type="HOGENOM" id="CLU_121866_0_0_6"/>
<dbReference type="Proteomes" id="UP000002716">
    <property type="component" value="Chromosome"/>
</dbReference>
<dbReference type="GO" id="GO:0009898">
    <property type="term" value="C:cytoplasmic side of plasma membrane"/>
    <property type="evidence" value="ECO:0007669"/>
    <property type="project" value="InterPro"/>
</dbReference>
<dbReference type="CDD" id="cd16323">
    <property type="entry name" value="Syd"/>
    <property type="match status" value="1"/>
</dbReference>
<dbReference type="Gene3D" id="3.40.1580.20">
    <property type="entry name" value="Syd protein"/>
    <property type="match status" value="1"/>
</dbReference>
<dbReference type="HAMAP" id="MF_01104">
    <property type="entry name" value="Syd"/>
    <property type="match status" value="1"/>
</dbReference>
<dbReference type="InterPro" id="IPR009948">
    <property type="entry name" value="Syd"/>
</dbReference>
<dbReference type="InterPro" id="IPR038228">
    <property type="entry name" value="Syd_sf"/>
</dbReference>
<dbReference type="NCBIfam" id="NF003439">
    <property type="entry name" value="PRK04968.1"/>
    <property type="match status" value="1"/>
</dbReference>
<dbReference type="Pfam" id="PF07348">
    <property type="entry name" value="Syd"/>
    <property type="match status" value="1"/>
</dbReference>
<sequence>MDDLTAQALKEFTARYCDAWHEEHKSWPLSEELYGVPSPCIISTTEDAVYWQPQPFTGEQNVNAVERAFDIVIQSAIHTFYTTQFAGDIHAQFGDIKLTLLQTWSEDDFRRVQENLIGHLVTQKRLKLPPTLFIATLEEELEVISVCNLSGEVCKETLGTRKRTHLASNLAEFLNQLKPLL</sequence>
<evidence type="ECO:0000255" key="1">
    <source>
        <dbReference type="HAMAP-Rule" id="MF_01104"/>
    </source>
</evidence>
<name>SYDP_SHIDS</name>
<gene>
    <name evidence="1" type="primary">syd</name>
    <name type="ordered locus">SDY_3010</name>
</gene>